<name>PYRB_ECOLI</name>
<organism>
    <name type="scientific">Escherichia coli (strain K12)</name>
    <dbReference type="NCBI Taxonomy" id="83333"/>
    <lineage>
        <taxon>Bacteria</taxon>
        <taxon>Pseudomonadati</taxon>
        <taxon>Pseudomonadota</taxon>
        <taxon>Gammaproteobacteria</taxon>
        <taxon>Enterobacterales</taxon>
        <taxon>Enterobacteriaceae</taxon>
        <taxon>Escherichia</taxon>
    </lineage>
</organism>
<reference key="1">
    <citation type="journal article" date="1983" name="Proc. Natl. Acad. Sci. U.S.A.">
        <title>Nucleotide sequence of the structural gene (pyrB) that encodes the catalytic polypeptide of aspartate transcarbamoylase of Escherichia coli.</title>
        <authorList>
            <person name="Hoover T.A."/>
            <person name="Roof W.D."/>
            <person name="Foltermann K.F."/>
            <person name="O'Donovan G.A."/>
            <person name="Bencini D.A."/>
            <person name="Wild J.R."/>
        </authorList>
    </citation>
    <scope>NUCLEOTIDE SEQUENCE [GENOMIC DNA]</scope>
</reference>
<reference key="2">
    <citation type="journal article" date="1984" name="Proc. Natl. Acad. Sci. U.S.A.">
        <title>Location of amino acid alterations in mutants of aspartate transcarbamoylase: structural aspects of interallelic complementation.</title>
        <authorList>
            <person name="Schachman H.K."/>
            <person name="Pauza C.D."/>
            <person name="Navre M."/>
            <person name="Karels M.J."/>
            <person name="Wu L."/>
            <person name="Yang Y.R."/>
        </authorList>
    </citation>
    <scope>NUCLEOTIDE SEQUENCE [GENOMIC DNA]</scope>
</reference>
<reference key="3">
    <citation type="journal article" date="1995" name="Nucleic Acids Res.">
        <title>Analysis of the Escherichia coli genome VI: DNA sequence of the region from 92.8 through 100 minutes.</title>
        <authorList>
            <person name="Burland V.D."/>
            <person name="Plunkett G. III"/>
            <person name="Sofia H.J."/>
            <person name="Daniels D.L."/>
            <person name="Blattner F.R."/>
        </authorList>
    </citation>
    <scope>NUCLEOTIDE SEQUENCE [LARGE SCALE GENOMIC DNA]</scope>
    <source>
        <strain>K12 / MG1655 / ATCC 47076</strain>
    </source>
</reference>
<reference key="4">
    <citation type="journal article" date="1997" name="Science">
        <title>The complete genome sequence of Escherichia coli K-12.</title>
        <authorList>
            <person name="Blattner F.R."/>
            <person name="Plunkett G. III"/>
            <person name="Bloch C.A."/>
            <person name="Perna N.T."/>
            <person name="Burland V."/>
            <person name="Riley M."/>
            <person name="Collado-Vides J."/>
            <person name="Glasner J.D."/>
            <person name="Rode C.K."/>
            <person name="Mayhew G.F."/>
            <person name="Gregor J."/>
            <person name="Davis N.W."/>
            <person name="Kirkpatrick H.A."/>
            <person name="Goeden M.A."/>
            <person name="Rose D.J."/>
            <person name="Mau B."/>
            <person name="Shao Y."/>
        </authorList>
    </citation>
    <scope>NUCLEOTIDE SEQUENCE [LARGE SCALE GENOMIC DNA]</scope>
    <scope>SEQUENCE REVISION TO 195</scope>
    <source>
        <strain>K12 / MG1655 / ATCC 47076</strain>
    </source>
</reference>
<reference key="5">
    <citation type="journal article" date="2006" name="Mol. Syst. Biol.">
        <title>Highly accurate genome sequences of Escherichia coli K-12 strains MG1655 and W3110.</title>
        <authorList>
            <person name="Hayashi K."/>
            <person name="Morooka N."/>
            <person name="Yamamoto Y."/>
            <person name="Fujita K."/>
            <person name="Isono K."/>
            <person name="Choi S."/>
            <person name="Ohtsubo E."/>
            <person name="Baba T."/>
            <person name="Wanner B.L."/>
            <person name="Mori H."/>
            <person name="Horiuchi T."/>
        </authorList>
    </citation>
    <scope>NUCLEOTIDE SEQUENCE [LARGE SCALE GENOMIC DNA]</scope>
    <source>
        <strain>K12 / W3110 / ATCC 27325 / DSM 5911</strain>
    </source>
</reference>
<reference key="6">
    <citation type="journal article" date="1983" name="Proc. Natl. Acad. Sci. U.S.A.">
        <title>Amino acid sequence of the catalytic subunit of aspartate transcarbamoylase from Escherichia coli.</title>
        <authorList>
            <person name="Konigsberg W.H."/>
            <person name="Henderson L."/>
        </authorList>
    </citation>
    <scope>PROTEIN SEQUENCE OF 2-311</scope>
</reference>
<reference key="7">
    <citation type="journal article" date="1988" name="Proc. Natl. Acad. Sci. U.S.A.">
        <title>Role of the ribosome in suppressing transcriptional termination at the pyrBI attenuator of Escherichia coli K-12.</title>
        <authorList>
            <person name="Roland K.L."/>
            <person name="Liu C."/>
            <person name="Turnbough C.L. Jr."/>
        </authorList>
    </citation>
    <scope>NUCLEOTIDE SEQUENCE [GENOMIC DNA] OF 1-54</scope>
</reference>
<reference key="8">
    <citation type="journal article" date="1985" name="J. Bacteriol.">
        <title>Role of translation and attenuation in the control of pyrBI operon expression in Escherichia coli K-12.</title>
        <authorList>
            <person name="Roland K.L."/>
            <person name="Powell F.E."/>
            <person name="Turnbough C.L. Jr."/>
        </authorList>
    </citation>
    <scope>NUCLEOTIDE SEQUENCE [GENOMIC DNA] OF 1-46</scope>
    <source>
        <strain>K12</strain>
    </source>
</reference>
<reference key="9">
    <citation type="journal article" date="1983" name="Proc. Natl. Acad. Sci. U.S.A.">
        <title>Attenuation control of pyrBI operon expression in Escherichia coli K-12.</title>
        <authorList>
            <person name="Turnbough C.L. Jr."/>
            <person name="Hicks K.L."/>
            <person name="Donahue J.P."/>
        </authorList>
    </citation>
    <scope>NUCLEOTIDE SEQUENCE [GENOMIC DNA] OF 1-46</scope>
    <source>
        <strain>K12</strain>
    </source>
</reference>
<reference key="10">
    <citation type="journal article" date="1990" name="J. Biol. Chem.">
        <title>Characterization of transcriptional initiation from promoters P1 and P2 of the pyrBI operon of Escherichia coli K12.</title>
        <authorList>
            <person name="Donahue J.P."/>
            <person name="Turnbough C.L. Jr."/>
        </authorList>
    </citation>
    <scope>NUCLEOTIDE SEQUENCE [GENOMIC DNA] OF 1-18</scope>
    <source>
        <strain>K12</strain>
    </source>
</reference>
<reference key="11">
    <citation type="submission" date="1994-09" db="UniProtKB">
        <authorList>
            <person name="Pasquali C."/>
            <person name="Sanchez J.-C."/>
            <person name="Ravier F."/>
            <person name="Golaz O."/>
            <person name="Hughes G.J."/>
            <person name="Frutiger S."/>
            <person name="Paquet N."/>
            <person name="Wilkins M."/>
            <person name="Appel R.D."/>
            <person name="Bairoch A."/>
            <person name="Hochstrasser D.F."/>
        </authorList>
    </citation>
    <scope>PROTEIN SEQUENCE OF 2-12</scope>
    <source>
        <strain>K12 / W3110 / ATCC 27325 / DSM 5911</strain>
    </source>
</reference>
<reference key="12">
    <citation type="journal article" date="1997" name="Electrophoresis">
        <title>Comparing the predicted and observed properties of proteins encoded in the genome of Escherichia coli K-12.</title>
        <authorList>
            <person name="Link A.J."/>
            <person name="Robison K."/>
            <person name="Church G.M."/>
        </authorList>
    </citation>
    <scope>PROTEIN SEQUENCE OF 2-21</scope>
    <source>
        <strain>K12 / EMG2</strain>
    </source>
</reference>
<reference key="13">
    <citation type="journal article" date="1998" name="Electrophoresis">
        <title>Extraction of membrane proteins by differential solubilization for separation using two-dimensional gel electrophoresis.</title>
        <authorList>
            <person name="Molloy M.P."/>
            <person name="Herbert B.R."/>
            <person name="Walsh B.J."/>
            <person name="Tyler M.I."/>
            <person name="Traini M."/>
            <person name="Sanchez J.-C."/>
            <person name="Hochstrasser D.F."/>
            <person name="Williams K.L."/>
            <person name="Gooley A.A."/>
        </authorList>
    </citation>
    <scope>PROTEIN SEQUENCE OF 2-6</scope>
    <source>
        <strain>K12 / W3110 / ATCC 27325 / DSM 5911</strain>
    </source>
</reference>
<reference key="14">
    <citation type="journal article" date="1956" name="J. Biol. Chem.">
        <title>Studies on the biosynthesis of carbamylaspartic acid.</title>
        <authorList>
            <person name="Lowenstein J.M."/>
            <person name="Cohen P.P."/>
        </authorList>
    </citation>
    <scope>FUNCTION</scope>
    <scope>CATALYTIC ACTIVITY</scope>
</reference>
<reference key="15">
    <citation type="journal article" date="1997" name="Electrophoresis">
        <title>Escherichia coli proteome analysis using the gene-protein database.</title>
        <authorList>
            <person name="VanBogelen R.A."/>
            <person name="Abshire K.Z."/>
            <person name="Moldover B."/>
            <person name="Olson E.R."/>
            <person name="Neidhardt F.C."/>
        </authorList>
    </citation>
    <scope>IDENTIFICATION BY 2D-GEL</scope>
</reference>
<reference key="16">
    <citation type="journal article" date="1984" name="Proc. Natl. Acad. Sci. U.S.A.">
        <title>Structure of unligated aspartate carbamoyltransferase of Escherichia coli at 2.6-A resolution.</title>
        <authorList>
            <person name="Ke H.-M."/>
            <person name="Honzatko R.B."/>
            <person name="Lipscomb W.N."/>
        </authorList>
    </citation>
    <scope>X-RAY CRYSTALLOGRAPHY (2.6 ANGSTROMS)</scope>
    <scope>SUBUNIT</scope>
</reference>
<reference key="17">
    <citation type="journal article" date="1988" name="Proc. Natl. Acad. Sci. U.S.A.">
        <title>Three-dimensional structure of carbamoyl phosphate and succinate bound to aspartate carbamoyltransferase.</title>
        <authorList>
            <person name="Gouaux J.E."/>
            <person name="Lipscomb W.N."/>
        </authorList>
    </citation>
    <scope>X-RAY CRYSTALLOGRAPHY (2.6 ANGSTROMS) IN COMPLEX WITH CARBAMOYL PHOSPHATE AND SUCCINATE</scope>
</reference>
<reference key="18">
    <citation type="journal article" date="1990" name="Biochemistry">
        <title>Structural consequences of effector binding to the T state of aspartate carbamoyltransferase: crystal structures of the unligated and ATP- and CTP-complexed enzymes at 2.6-A resolution.</title>
        <authorList>
            <person name="Stevens R.C."/>
            <person name="Gouaux J.E."/>
            <person name="Lipscomb W.N."/>
        </authorList>
    </citation>
    <scope>X-RAY CRYSTALLOGRAPHY (2.6 ANGSTROMS)</scope>
</reference>
<reference key="19">
    <citation type="journal article" date="1990" name="Biochemistry">
        <title>Crystal structures of aspartate carbamoyltransferase ligated with phosphonoacetamide, malonate, and CTP or ATP at 2.8-A resolution and neutral pH.</title>
        <authorList>
            <person name="Gouaux J.E."/>
            <person name="Stevens R.C."/>
            <person name="Lipscomb W.N."/>
        </authorList>
    </citation>
    <scope>X-RAY CRYSTALLOGRAPHY (2.8 ANGSTROMS)</scope>
</reference>
<reference key="20">
    <citation type="journal article" date="1999" name="Proc. Natl. Acad. Sci. U.S.A.">
        <title>Assessment of the allosteric mechanism of aspartate transcarbamoylase based on the crystalline structure of the unregulated catalytic subunit.</title>
        <authorList>
            <person name="Beernink P.T."/>
            <person name="Endrizzi J.A."/>
            <person name="Alber T."/>
            <person name="Schachman H.K."/>
        </authorList>
    </citation>
    <scope>X-RAY CRYSTALLOGRAPHY (1.88 ANGSTROMS)</scope>
</reference>
<gene>
    <name type="primary">pyrB</name>
    <name type="ordered locus">b4245</name>
    <name type="ordered locus">JW4204</name>
</gene>
<proteinExistence type="evidence at protein level"/>
<protein>
    <recommendedName>
        <fullName evidence="1">Aspartate carbamoyltransferase catalytic subunit</fullName>
        <ecNumber evidence="2">2.1.3.2</ecNumber>
    </recommendedName>
    <alternativeName>
        <fullName evidence="1">Aspartate transcarbamylase</fullName>
        <shortName evidence="1">ATCase</shortName>
    </alternativeName>
</protein>
<evidence type="ECO:0000255" key="1">
    <source>
        <dbReference type="HAMAP-Rule" id="MF_00001"/>
    </source>
</evidence>
<evidence type="ECO:0000269" key="2">
    <source>
    </source>
</evidence>
<evidence type="ECO:0000269" key="3">
    <source>
    </source>
</evidence>
<evidence type="ECO:0000269" key="4">
    <source>
    </source>
</evidence>
<evidence type="ECO:0000269" key="5">
    <source>
    </source>
</evidence>
<evidence type="ECO:0000269" key="6">
    <source>
    </source>
</evidence>
<evidence type="ECO:0000269" key="7">
    <source>
    </source>
</evidence>
<evidence type="ECO:0000269" key="8">
    <source ref="11"/>
</evidence>
<evidence type="ECO:0000305" key="9"/>
<evidence type="ECO:0000305" key="10">
    <source>
    </source>
</evidence>
<evidence type="ECO:0000305" key="11">
    <source>
    </source>
</evidence>
<evidence type="ECO:0007829" key="12">
    <source>
        <dbReference type="PDB" id="1D09"/>
    </source>
</evidence>
<evidence type="ECO:0007829" key="13">
    <source>
        <dbReference type="PDB" id="1Q95"/>
    </source>
</evidence>
<evidence type="ECO:0007829" key="14">
    <source>
        <dbReference type="PDB" id="1TTH"/>
    </source>
</evidence>
<evidence type="ECO:0007829" key="15">
    <source>
        <dbReference type="PDB" id="1TUG"/>
    </source>
</evidence>
<evidence type="ECO:0007829" key="16">
    <source>
        <dbReference type="PDB" id="2AIR"/>
    </source>
</evidence>
<evidence type="ECO:0007829" key="17">
    <source>
        <dbReference type="PDB" id="2H3E"/>
    </source>
</evidence>
<evidence type="ECO:0007829" key="18">
    <source>
        <dbReference type="PDB" id="2QGF"/>
    </source>
</evidence>
<evidence type="ECO:0007829" key="19">
    <source>
        <dbReference type="PDB" id="3CSU"/>
    </source>
</evidence>
<evidence type="ECO:0007829" key="20">
    <source>
        <dbReference type="PDB" id="4FYY"/>
    </source>
</evidence>
<sequence>MANPLYQKHIISINDLSRDDLNLVLATAAKLKANPQPELLKHKVIASCFFEASTRTRLSFETSMHRLGASVVGFSDSANTSLGKKGETLADTISVISTYVDAIVMRHPQEGAARLATEFSGNVPVLNAGDGSNQHPTQTLLDLFTIQETQGRLDNLHVAMVGDLKYGRTVHSLTQALAKFDGNRFYFIAPDALAMPQYILDMLDEKGIAWSLHSSIEEVMAEVDILYMTRVQKERLDPSEYANVKAQFVLRASDLHNAKANMKVLHPLPRVDEIATDVDKTPHAWYFQQAGNGIFARQALLALVLNRDLVL</sequence>
<accession>P0A786</accession>
<accession>P00479</accession>
<accession>Q2M662</accession>
<accession>Q47555</accession>
<accession>Q47557</accession>
<feature type="initiator methionine" description="Removed" evidence="4 6 7 8">
    <location>
        <position position="1"/>
    </location>
</feature>
<feature type="chain" id="PRO_0000113128" description="Aspartate carbamoyltransferase catalytic subunit">
    <location>
        <begin position="2"/>
        <end position="311"/>
    </location>
</feature>
<feature type="binding site" evidence="1 3">
    <location>
        <position position="55"/>
    </location>
    <ligand>
        <name>carbamoyl phosphate</name>
        <dbReference type="ChEBI" id="CHEBI:58228"/>
    </ligand>
</feature>
<feature type="binding site" evidence="1 3">
    <location>
        <position position="56"/>
    </location>
    <ligand>
        <name>carbamoyl phosphate</name>
        <dbReference type="ChEBI" id="CHEBI:58228"/>
    </ligand>
</feature>
<feature type="binding site" evidence="1 11">
    <location>
        <position position="85"/>
    </location>
    <ligand>
        <name>L-aspartate</name>
        <dbReference type="ChEBI" id="CHEBI:29991"/>
    </ligand>
</feature>
<feature type="binding site" evidence="1 3">
    <location>
        <position position="106"/>
    </location>
    <ligand>
        <name>carbamoyl phosphate</name>
        <dbReference type="ChEBI" id="CHEBI:58228"/>
    </ligand>
</feature>
<feature type="binding site" evidence="1 3">
    <location>
        <position position="135"/>
    </location>
    <ligand>
        <name>carbamoyl phosphate</name>
        <dbReference type="ChEBI" id="CHEBI:58228"/>
    </ligand>
</feature>
<feature type="binding site" evidence="1 3">
    <location>
        <position position="138"/>
    </location>
    <ligand>
        <name>carbamoyl phosphate</name>
        <dbReference type="ChEBI" id="CHEBI:58228"/>
    </ligand>
</feature>
<feature type="binding site" evidence="1 11">
    <location>
        <position position="168"/>
    </location>
    <ligand>
        <name>L-aspartate</name>
        <dbReference type="ChEBI" id="CHEBI:29991"/>
    </ligand>
</feature>
<feature type="binding site" evidence="1 11">
    <location>
        <position position="230"/>
    </location>
    <ligand>
        <name>L-aspartate</name>
        <dbReference type="ChEBI" id="CHEBI:29991"/>
    </ligand>
</feature>
<feature type="binding site" evidence="1 3">
    <location>
        <position position="268"/>
    </location>
    <ligand>
        <name>carbamoyl phosphate</name>
        <dbReference type="ChEBI" id="CHEBI:58228"/>
    </ligand>
</feature>
<feature type="binding site" evidence="1 3">
    <location>
        <position position="269"/>
    </location>
    <ligand>
        <name>carbamoyl phosphate</name>
        <dbReference type="ChEBI" id="CHEBI:58228"/>
    </ligand>
</feature>
<feature type="sequence conflict" description="In Ref. 1; AAA24474 and 6; AA sequence." evidence="9" ref="1 6">
    <original>E</original>
    <variation>Q</variation>
    <location>
        <position position="61"/>
    </location>
</feature>
<feature type="sequence conflict" description="In Ref. 6; AA sequence." evidence="9" ref="6">
    <original>E</original>
    <variation>Q</variation>
    <location>
        <position position="87"/>
    </location>
</feature>
<feature type="sequence conflict" description="In Ref. 6; AA sequence." evidence="9" ref="6">
    <original>D</original>
    <variation>N</variation>
    <location>
        <position position="91"/>
    </location>
</feature>
<feature type="sequence conflict" description="In Ref. 6; AA sequence." evidence="9" ref="6">
    <original>D</original>
    <variation>N</variation>
    <location>
        <position position="130"/>
    </location>
</feature>
<feature type="sequence conflict" description="In Ref. 2; AAA24476." evidence="9" ref="2">
    <original>Q</original>
    <variation>E</variation>
    <location>
        <position position="150"/>
    </location>
</feature>
<feature type="sequence conflict" description="In Ref. 3; AAA97142." evidence="9" ref="3">
    <original>P</original>
    <variation>R</variation>
    <location>
        <position position="196"/>
    </location>
</feature>
<feature type="sequence conflict" description="In Ref. 1; AAA24474 and 6; AA sequence." evidence="9" ref="1 6">
    <original>A</original>
    <variation>V</variation>
    <location>
        <position position="221"/>
    </location>
</feature>
<feature type="sequence conflict" description="In Ref. 6; AA sequence." evidence="9" ref="6">
    <original>N</original>
    <variation>D</variation>
    <location>
        <position position="257"/>
    </location>
</feature>
<feature type="sequence conflict" description="In Ref. 6; AA sequence." evidence="9" ref="6">
    <original>ANM</original>
    <variation>MNA</variation>
    <location>
        <begin position="260"/>
        <end position="262"/>
    </location>
</feature>
<feature type="sequence conflict" description="In Ref. 1; AAA24474." evidence="9" ref="1">
    <original>R</original>
    <variation>L</variation>
    <location>
        <position position="297"/>
    </location>
</feature>
<feature type="turn" evidence="19">
    <location>
        <begin position="4"/>
        <end position="7"/>
    </location>
</feature>
<feature type="helix" evidence="19">
    <location>
        <begin position="13"/>
        <end position="15"/>
    </location>
</feature>
<feature type="helix" evidence="19">
    <location>
        <begin position="18"/>
        <end position="33"/>
    </location>
</feature>
<feature type="turn" evidence="19">
    <location>
        <begin position="37"/>
        <end position="42"/>
    </location>
</feature>
<feature type="strand" evidence="19">
    <location>
        <begin position="44"/>
        <end position="51"/>
    </location>
</feature>
<feature type="helix" evidence="19">
    <location>
        <begin position="54"/>
        <end position="65"/>
    </location>
</feature>
<feature type="turn" evidence="19">
    <location>
        <begin position="66"/>
        <end position="68"/>
    </location>
</feature>
<feature type="strand" evidence="19">
    <location>
        <begin position="70"/>
        <end position="75"/>
    </location>
</feature>
<feature type="helix" evidence="12">
    <location>
        <begin position="77"/>
        <end position="79"/>
    </location>
</feature>
<feature type="turn" evidence="20">
    <location>
        <begin position="80"/>
        <end position="82"/>
    </location>
</feature>
<feature type="helix" evidence="19">
    <location>
        <begin position="86"/>
        <end position="96"/>
    </location>
</feature>
<feature type="turn" evidence="19">
    <location>
        <begin position="97"/>
        <end position="99"/>
    </location>
</feature>
<feature type="strand" evidence="19">
    <location>
        <begin position="101"/>
        <end position="109"/>
    </location>
</feature>
<feature type="helix" evidence="19">
    <location>
        <begin position="112"/>
        <end position="119"/>
    </location>
</feature>
<feature type="strand" evidence="16">
    <location>
        <begin position="120"/>
        <end position="122"/>
    </location>
</feature>
<feature type="strand" evidence="19">
    <location>
        <begin position="125"/>
        <end position="130"/>
    </location>
</feature>
<feature type="turn" evidence="18">
    <location>
        <begin position="131"/>
        <end position="133"/>
    </location>
</feature>
<feature type="helix" evidence="19">
    <location>
        <begin position="136"/>
        <end position="150"/>
    </location>
</feature>
<feature type="strand" evidence="19">
    <location>
        <begin position="153"/>
        <end position="155"/>
    </location>
</feature>
<feature type="strand" evidence="19">
    <location>
        <begin position="157"/>
        <end position="162"/>
    </location>
</feature>
<feature type="turn" evidence="19">
    <location>
        <begin position="164"/>
        <end position="166"/>
    </location>
</feature>
<feature type="helix" evidence="19">
    <location>
        <begin position="168"/>
        <end position="178"/>
    </location>
</feature>
<feature type="strand" evidence="19">
    <location>
        <begin position="180"/>
        <end position="182"/>
    </location>
</feature>
<feature type="strand" evidence="19">
    <location>
        <begin position="184"/>
        <end position="188"/>
    </location>
</feature>
<feature type="helix" evidence="19">
    <location>
        <begin position="191"/>
        <end position="193"/>
    </location>
</feature>
<feature type="helix" evidence="19">
    <location>
        <begin position="197"/>
        <end position="205"/>
    </location>
</feature>
<feature type="strand" evidence="19">
    <location>
        <begin position="210"/>
        <end position="212"/>
    </location>
</feature>
<feature type="helix" evidence="19">
    <location>
        <begin position="216"/>
        <end position="218"/>
    </location>
</feature>
<feature type="turn" evidence="19">
    <location>
        <begin position="219"/>
        <end position="222"/>
    </location>
</feature>
<feature type="strand" evidence="19">
    <location>
        <begin position="224"/>
        <end position="228"/>
    </location>
</feature>
<feature type="helix" evidence="19">
    <location>
        <begin position="233"/>
        <end position="235"/>
    </location>
</feature>
<feature type="helix" evidence="13">
    <location>
        <begin position="238"/>
        <end position="240"/>
    </location>
</feature>
<feature type="helix" evidence="19">
    <location>
        <begin position="241"/>
        <end position="244"/>
    </location>
</feature>
<feature type="helix" evidence="20">
    <location>
        <begin position="245"/>
        <end position="247"/>
    </location>
</feature>
<feature type="strand" evidence="16">
    <location>
        <begin position="248"/>
        <end position="250"/>
    </location>
</feature>
<feature type="helix" evidence="19">
    <location>
        <begin position="252"/>
        <end position="255"/>
    </location>
</feature>
<feature type="strand" evidence="14">
    <location>
        <begin position="256"/>
        <end position="258"/>
    </location>
</feature>
<feature type="strand" evidence="19">
    <location>
        <begin position="263"/>
        <end position="265"/>
    </location>
</feature>
<feature type="strand" evidence="19">
    <location>
        <begin position="271"/>
        <end position="274"/>
    </location>
</feature>
<feature type="helix" evidence="19">
    <location>
        <begin position="276"/>
        <end position="279"/>
    </location>
</feature>
<feature type="strand" evidence="17">
    <location>
        <begin position="281"/>
        <end position="284"/>
    </location>
</feature>
<feature type="helix" evidence="19">
    <location>
        <begin position="286"/>
        <end position="291"/>
    </location>
</feature>
<feature type="helix" evidence="19">
    <location>
        <begin position="293"/>
        <end position="305"/>
    </location>
</feature>
<feature type="strand" evidence="15">
    <location>
        <begin position="306"/>
        <end position="308"/>
    </location>
</feature>
<comment type="function">
    <text evidence="1 2">Catalyzes the condensation of carbamoyl phosphate and aspartate to form carbamoyl aspartate and inorganic phosphate, the committed step in the de novo pyrimidine nucleotide biosynthesis pathway.</text>
</comment>
<comment type="catalytic activity">
    <reaction evidence="1 2">
        <text>carbamoyl phosphate + L-aspartate = N-carbamoyl-L-aspartate + phosphate + H(+)</text>
        <dbReference type="Rhea" id="RHEA:20013"/>
        <dbReference type="ChEBI" id="CHEBI:15378"/>
        <dbReference type="ChEBI" id="CHEBI:29991"/>
        <dbReference type="ChEBI" id="CHEBI:32814"/>
        <dbReference type="ChEBI" id="CHEBI:43474"/>
        <dbReference type="ChEBI" id="CHEBI:58228"/>
        <dbReference type="EC" id="2.1.3.2"/>
    </reaction>
</comment>
<comment type="pathway">
    <text evidence="1 10">Pyrimidine metabolism; UMP biosynthesis via de novo pathway; (S)-dihydroorotate from bicarbonate: step 2/3.</text>
</comment>
<comment type="subunit">
    <text evidence="1 5">Heterododecamer (2C3:3R2) of six catalytic PyrB chains organized as two trimers (C3), and six regulatory PyrI chains organized as three dimers (R2).</text>
</comment>
<comment type="interaction">
    <interactant intactId="EBI-906620">
        <id>P0A786</id>
    </interactant>
    <interactant intactId="EBI-906620">
        <id>P0A786</id>
        <label>pyrB</label>
    </interactant>
    <organismsDiffer>false</organismsDiffer>
    <experiments>4</experiments>
</comment>
<comment type="interaction">
    <interactant intactId="EBI-906620">
        <id>P0A786</id>
    </interactant>
    <interactant intactId="EBI-906630">
        <id>P0A7F3</id>
        <label>pyrI</label>
    </interactant>
    <organismsDiffer>false</organismsDiffer>
    <experiments>18</experiments>
</comment>
<comment type="similarity">
    <text evidence="1">Belongs to the aspartate/ornithine carbamoyltransferase superfamily. ATCase family.</text>
</comment>
<keyword id="KW-0002">3D-structure</keyword>
<keyword id="KW-0903">Direct protein sequencing</keyword>
<keyword id="KW-0665">Pyrimidine biosynthesis</keyword>
<keyword id="KW-1185">Reference proteome</keyword>
<keyword id="KW-0808">Transferase</keyword>
<dbReference type="EC" id="2.1.3.2" evidence="2"/>
<dbReference type="EMBL" id="J01670">
    <property type="protein sequence ID" value="AAA24474.1"/>
    <property type="molecule type" value="Genomic_DNA"/>
</dbReference>
<dbReference type="EMBL" id="K01472">
    <property type="protein sequence ID" value="AAA24476.1"/>
    <property type="molecule type" value="Genomic_DNA"/>
</dbReference>
<dbReference type="EMBL" id="U14003">
    <property type="protein sequence ID" value="AAA97142.1"/>
    <property type="molecule type" value="Genomic_DNA"/>
</dbReference>
<dbReference type="EMBL" id="U00096">
    <property type="protein sequence ID" value="AAC77202.1"/>
    <property type="molecule type" value="Genomic_DNA"/>
</dbReference>
<dbReference type="EMBL" id="AP009048">
    <property type="protein sequence ID" value="BAE78244.1"/>
    <property type="molecule type" value="Genomic_DNA"/>
</dbReference>
<dbReference type="EMBL" id="M10743">
    <property type="protein sequence ID" value="AAA24479.1"/>
    <property type="molecule type" value="Genomic_DNA"/>
</dbReference>
<dbReference type="EMBL" id="M60508">
    <property type="protein sequence ID" value="AAA24481.1"/>
    <property type="molecule type" value="Genomic_DNA"/>
</dbReference>
<dbReference type="PIR" id="H65236">
    <property type="entry name" value="DTECC"/>
</dbReference>
<dbReference type="RefSeq" id="NP_418666.1">
    <property type="nucleotide sequence ID" value="NC_000913.3"/>
</dbReference>
<dbReference type="RefSeq" id="WP_000013046.1">
    <property type="nucleotide sequence ID" value="NZ_STEB01000013.1"/>
</dbReference>
<dbReference type="PDB" id="1ACM">
    <property type="method" value="X-ray"/>
    <property type="resolution" value="2.80 A"/>
    <property type="chains" value="A/C=2-311"/>
</dbReference>
<dbReference type="PDB" id="1AT1">
    <property type="method" value="X-ray"/>
    <property type="resolution" value="2.80 A"/>
    <property type="chains" value="A/C=2-311"/>
</dbReference>
<dbReference type="PDB" id="1D09">
    <property type="method" value="X-ray"/>
    <property type="resolution" value="2.10 A"/>
    <property type="chains" value="A/C=2-311"/>
</dbReference>
<dbReference type="PDB" id="1EKX">
    <property type="method" value="X-ray"/>
    <property type="resolution" value="1.95 A"/>
    <property type="chains" value="A/B/C=1-311"/>
</dbReference>
<dbReference type="PDB" id="1EZZ">
    <property type="method" value="X-ray"/>
    <property type="resolution" value="2.70 A"/>
    <property type="chains" value="A/C=2-311"/>
</dbReference>
<dbReference type="PDB" id="1F1B">
    <property type="method" value="X-ray"/>
    <property type="resolution" value="2.30 A"/>
    <property type="chains" value="A/C=2-311"/>
</dbReference>
<dbReference type="PDB" id="1I5O">
    <property type="method" value="X-ray"/>
    <property type="resolution" value="2.80 A"/>
    <property type="chains" value="A/C=2-311"/>
</dbReference>
<dbReference type="PDB" id="1NBE">
    <property type="method" value="X-ray"/>
    <property type="resolution" value="2.60 A"/>
    <property type="chains" value="A/C=2-311"/>
</dbReference>
<dbReference type="PDB" id="1Q95">
    <property type="method" value="X-ray"/>
    <property type="resolution" value="2.46 A"/>
    <property type="chains" value="A/B/C/D/E/F=2-311"/>
</dbReference>
<dbReference type="PDB" id="1R0B">
    <property type="method" value="X-ray"/>
    <property type="resolution" value="2.90 A"/>
    <property type="chains" value="A/B/C/D/E/F=2-311"/>
</dbReference>
<dbReference type="PDB" id="1R0C">
    <property type="method" value="X-ray"/>
    <property type="resolution" value="2.37 A"/>
    <property type="chains" value="A/G=2-311"/>
</dbReference>
<dbReference type="PDB" id="1RAA">
    <property type="method" value="X-ray"/>
    <property type="resolution" value="2.50 A"/>
    <property type="chains" value="A/C=2-311"/>
</dbReference>
<dbReference type="PDB" id="1RAB">
    <property type="method" value="X-ray"/>
    <property type="resolution" value="2.50 A"/>
    <property type="chains" value="A/C=2-311"/>
</dbReference>
<dbReference type="PDB" id="1RAC">
    <property type="method" value="X-ray"/>
    <property type="resolution" value="2.50 A"/>
    <property type="chains" value="A/C=2-311"/>
</dbReference>
<dbReference type="PDB" id="1RAD">
    <property type="method" value="X-ray"/>
    <property type="resolution" value="2.50 A"/>
    <property type="chains" value="A/C=2-311"/>
</dbReference>
<dbReference type="PDB" id="1RAE">
    <property type="method" value="X-ray"/>
    <property type="resolution" value="2.50 A"/>
    <property type="chains" value="A/C=2-311"/>
</dbReference>
<dbReference type="PDB" id="1RAF">
    <property type="method" value="X-ray"/>
    <property type="resolution" value="2.50 A"/>
    <property type="chains" value="A/C=2-311"/>
</dbReference>
<dbReference type="PDB" id="1RAG">
    <property type="method" value="X-ray"/>
    <property type="resolution" value="2.50 A"/>
    <property type="chains" value="A/C=2-311"/>
</dbReference>
<dbReference type="PDB" id="1RAH">
    <property type="method" value="X-ray"/>
    <property type="resolution" value="2.50 A"/>
    <property type="chains" value="A/C=2-311"/>
</dbReference>
<dbReference type="PDB" id="1RAI">
    <property type="method" value="X-ray"/>
    <property type="resolution" value="2.50 A"/>
    <property type="chains" value="A/C=2-311"/>
</dbReference>
<dbReference type="PDB" id="1SKU">
    <property type="method" value="X-ray"/>
    <property type="resolution" value="2.60 A"/>
    <property type="chains" value="A/C=2-311"/>
</dbReference>
<dbReference type="PDB" id="1TTH">
    <property type="method" value="X-ray"/>
    <property type="resolution" value="2.80 A"/>
    <property type="chains" value="A/C=2-311"/>
</dbReference>
<dbReference type="PDB" id="1TU0">
    <property type="method" value="X-ray"/>
    <property type="resolution" value="2.55 A"/>
    <property type="chains" value="A/C=2-311"/>
</dbReference>
<dbReference type="PDB" id="1TUG">
    <property type="method" value="X-ray"/>
    <property type="resolution" value="2.10 A"/>
    <property type="chains" value="A/C=2-311"/>
</dbReference>
<dbReference type="PDB" id="1XJW">
    <property type="method" value="X-ray"/>
    <property type="resolution" value="2.71 A"/>
    <property type="chains" value="A/C=2-311"/>
</dbReference>
<dbReference type="PDB" id="1ZA1">
    <property type="method" value="X-ray"/>
    <property type="resolution" value="2.20 A"/>
    <property type="chains" value="A/C=2-311"/>
</dbReference>
<dbReference type="PDB" id="1ZA2">
    <property type="method" value="X-ray"/>
    <property type="resolution" value="2.50 A"/>
    <property type="chains" value="A/C=2-311"/>
</dbReference>
<dbReference type="PDB" id="2A0F">
    <property type="method" value="X-ray"/>
    <property type="resolution" value="2.90 A"/>
    <property type="chains" value="A/C=2-311"/>
</dbReference>
<dbReference type="PDB" id="2AIR">
    <property type="method" value="X-ray"/>
    <property type="resolution" value="2.00 A"/>
    <property type="chains" value="A/G=2-311"/>
</dbReference>
<dbReference type="PDB" id="2AT1">
    <property type="method" value="X-ray"/>
    <property type="resolution" value="2.80 A"/>
    <property type="chains" value="A/C=2-311"/>
</dbReference>
<dbReference type="PDB" id="2ATC">
    <property type="method" value="X-ray"/>
    <property type="resolution" value="3.00 A"/>
    <property type="chains" value="A=2-311"/>
</dbReference>
<dbReference type="PDB" id="2FZC">
    <property type="method" value="X-ray"/>
    <property type="resolution" value="2.10 A"/>
    <property type="chains" value="A/C=2-311"/>
</dbReference>
<dbReference type="PDB" id="2FZG">
    <property type="method" value="X-ray"/>
    <property type="resolution" value="2.25 A"/>
    <property type="chains" value="A/C=2-311"/>
</dbReference>
<dbReference type="PDB" id="2FZK">
    <property type="method" value="X-ray"/>
    <property type="resolution" value="2.50 A"/>
    <property type="chains" value="A/C=2-311"/>
</dbReference>
<dbReference type="PDB" id="2H3E">
    <property type="method" value="X-ray"/>
    <property type="resolution" value="2.30 A"/>
    <property type="chains" value="A/C=2-311"/>
</dbReference>
<dbReference type="PDB" id="2HSE">
    <property type="method" value="X-ray"/>
    <property type="resolution" value="2.60 A"/>
    <property type="chains" value="A/C=2-311"/>
</dbReference>
<dbReference type="PDB" id="2IPO">
    <property type="method" value="X-ray"/>
    <property type="resolution" value="2.60 A"/>
    <property type="chains" value="A/C=2-311"/>
</dbReference>
<dbReference type="PDB" id="2QG9">
    <property type="method" value="X-ray"/>
    <property type="resolution" value="2.70 A"/>
    <property type="chains" value="A/C=2-311"/>
</dbReference>
<dbReference type="PDB" id="2QGF">
    <property type="method" value="X-ray"/>
    <property type="resolution" value="2.20 A"/>
    <property type="chains" value="A/C=2-311"/>
</dbReference>
<dbReference type="PDB" id="3AT1">
    <property type="method" value="X-ray"/>
    <property type="resolution" value="2.80 A"/>
    <property type="chains" value="A/C=2-311"/>
</dbReference>
<dbReference type="PDB" id="3CSU">
    <property type="method" value="X-ray"/>
    <property type="resolution" value="1.88 A"/>
    <property type="chains" value="A/B/C=2-311"/>
</dbReference>
<dbReference type="PDB" id="3D7S">
    <property type="method" value="X-ray"/>
    <property type="resolution" value="2.80 A"/>
    <property type="chains" value="A/C=2-311"/>
</dbReference>
<dbReference type="PDB" id="3MPU">
    <property type="method" value="X-ray"/>
    <property type="resolution" value="2.86 A"/>
    <property type="chains" value="A/C/E=2-311"/>
</dbReference>
<dbReference type="PDB" id="3NPM">
    <property type="method" value="X-ray"/>
    <property type="resolution" value="2.10 A"/>
    <property type="chains" value="A=2-311"/>
</dbReference>
<dbReference type="PDB" id="4AT1">
    <property type="method" value="X-ray"/>
    <property type="resolution" value="2.60 A"/>
    <property type="chains" value="A/C=2-311"/>
</dbReference>
<dbReference type="PDB" id="4E2F">
    <property type="method" value="X-ray"/>
    <property type="resolution" value="2.80 A"/>
    <property type="chains" value="A/C/E/G/I/K=2-311"/>
</dbReference>
<dbReference type="PDB" id="4F04">
    <property type="method" value="X-ray"/>
    <property type="resolution" value="2.30 A"/>
    <property type="chains" value="A/C=2-311"/>
</dbReference>
<dbReference type="PDB" id="4FYV">
    <property type="method" value="X-ray"/>
    <property type="resolution" value="2.10 A"/>
    <property type="chains" value="A/C=2-311"/>
</dbReference>
<dbReference type="PDB" id="4FYW">
    <property type="method" value="X-ray"/>
    <property type="resolution" value="2.10 A"/>
    <property type="chains" value="A/C=2-311"/>
</dbReference>
<dbReference type="PDB" id="4FYX">
    <property type="method" value="X-ray"/>
    <property type="resolution" value="2.09 A"/>
    <property type="chains" value="A/C=2-311"/>
</dbReference>
<dbReference type="PDB" id="4FYY">
    <property type="method" value="X-ray"/>
    <property type="resolution" value="1.94 A"/>
    <property type="chains" value="A/C=2-311"/>
</dbReference>
<dbReference type="PDB" id="5AT1">
    <property type="method" value="X-ray"/>
    <property type="resolution" value="2.60 A"/>
    <property type="chains" value="A/C=2-311"/>
</dbReference>
<dbReference type="PDB" id="5VMQ">
    <property type="method" value="X-ray"/>
    <property type="resolution" value="2.01 A"/>
    <property type="chains" value="A/B/C=2-311"/>
</dbReference>
<dbReference type="PDB" id="6AT1">
    <property type="method" value="X-ray"/>
    <property type="resolution" value="2.60 A"/>
    <property type="chains" value="A/C=2-311"/>
</dbReference>
<dbReference type="PDB" id="6KJ7">
    <property type="method" value="X-ray"/>
    <property type="resolution" value="2.84 A"/>
    <property type="chains" value="A=2-311"/>
</dbReference>
<dbReference type="PDB" id="6KJ8">
    <property type="method" value="X-ray"/>
    <property type="resolution" value="3.01 A"/>
    <property type="chains" value="A/C/E=2-311"/>
</dbReference>
<dbReference type="PDB" id="6KJ9">
    <property type="method" value="X-ray"/>
    <property type="resolution" value="2.50 A"/>
    <property type="chains" value="A/B/C/D/E/F=2-311"/>
</dbReference>
<dbReference type="PDB" id="6KJA">
    <property type="method" value="X-ray"/>
    <property type="resolution" value="3.06 A"/>
    <property type="chains" value="A/C/E=2-311"/>
</dbReference>
<dbReference type="PDB" id="6KJB">
    <property type="method" value="X-ray"/>
    <property type="resolution" value="2.06 A"/>
    <property type="chains" value="A=2-311"/>
</dbReference>
<dbReference type="PDB" id="7AT1">
    <property type="method" value="X-ray"/>
    <property type="resolution" value="2.80 A"/>
    <property type="chains" value="A/C=2-311"/>
</dbReference>
<dbReference type="PDB" id="8AT1">
    <property type="method" value="X-ray"/>
    <property type="resolution" value="2.80 A"/>
    <property type="chains" value="A/C=2-311"/>
</dbReference>
<dbReference type="PDB" id="8ATC">
    <property type="method" value="X-ray"/>
    <property type="resolution" value="2.50 A"/>
    <property type="chains" value="A/C=2-311"/>
</dbReference>
<dbReference type="PDB" id="9ATC">
    <property type="method" value="X-ray"/>
    <property type="resolution" value="2.40 A"/>
    <property type="chains" value="A=2-311"/>
</dbReference>
<dbReference type="PDBsum" id="1ACM"/>
<dbReference type="PDBsum" id="1AT1"/>
<dbReference type="PDBsum" id="1D09"/>
<dbReference type="PDBsum" id="1EKX"/>
<dbReference type="PDBsum" id="1EZZ"/>
<dbReference type="PDBsum" id="1F1B"/>
<dbReference type="PDBsum" id="1I5O"/>
<dbReference type="PDBsum" id="1NBE"/>
<dbReference type="PDBsum" id="1Q95"/>
<dbReference type="PDBsum" id="1R0B"/>
<dbReference type="PDBsum" id="1R0C"/>
<dbReference type="PDBsum" id="1RAA"/>
<dbReference type="PDBsum" id="1RAB"/>
<dbReference type="PDBsum" id="1RAC"/>
<dbReference type="PDBsum" id="1RAD"/>
<dbReference type="PDBsum" id="1RAE"/>
<dbReference type="PDBsum" id="1RAF"/>
<dbReference type="PDBsum" id="1RAG"/>
<dbReference type="PDBsum" id="1RAH"/>
<dbReference type="PDBsum" id="1RAI"/>
<dbReference type="PDBsum" id="1SKU"/>
<dbReference type="PDBsum" id="1TTH"/>
<dbReference type="PDBsum" id="1TU0"/>
<dbReference type="PDBsum" id="1TUG"/>
<dbReference type="PDBsum" id="1XJW"/>
<dbReference type="PDBsum" id="1ZA1"/>
<dbReference type="PDBsum" id="1ZA2"/>
<dbReference type="PDBsum" id="2A0F"/>
<dbReference type="PDBsum" id="2AIR"/>
<dbReference type="PDBsum" id="2AT1"/>
<dbReference type="PDBsum" id="2ATC"/>
<dbReference type="PDBsum" id="2FZC"/>
<dbReference type="PDBsum" id="2FZG"/>
<dbReference type="PDBsum" id="2FZK"/>
<dbReference type="PDBsum" id="2H3E"/>
<dbReference type="PDBsum" id="2HSE"/>
<dbReference type="PDBsum" id="2IPO"/>
<dbReference type="PDBsum" id="2QG9"/>
<dbReference type="PDBsum" id="2QGF"/>
<dbReference type="PDBsum" id="3AT1"/>
<dbReference type="PDBsum" id="3CSU"/>
<dbReference type="PDBsum" id="3D7S"/>
<dbReference type="PDBsum" id="3MPU"/>
<dbReference type="PDBsum" id="3NPM"/>
<dbReference type="PDBsum" id="4AT1"/>
<dbReference type="PDBsum" id="4E2F"/>
<dbReference type="PDBsum" id="4F04"/>
<dbReference type="PDBsum" id="4FYV"/>
<dbReference type="PDBsum" id="4FYW"/>
<dbReference type="PDBsum" id="4FYX"/>
<dbReference type="PDBsum" id="4FYY"/>
<dbReference type="PDBsum" id="5AT1"/>
<dbReference type="PDBsum" id="5VMQ"/>
<dbReference type="PDBsum" id="6AT1"/>
<dbReference type="PDBsum" id="6KJ7"/>
<dbReference type="PDBsum" id="6KJ8"/>
<dbReference type="PDBsum" id="6KJ9"/>
<dbReference type="PDBsum" id="6KJA"/>
<dbReference type="PDBsum" id="6KJB"/>
<dbReference type="PDBsum" id="7AT1"/>
<dbReference type="PDBsum" id="8AT1"/>
<dbReference type="PDBsum" id="8ATC"/>
<dbReference type="PDBsum" id="9ATC"/>
<dbReference type="SMR" id="P0A786"/>
<dbReference type="BioGRID" id="4260722">
    <property type="interactions" value="57"/>
</dbReference>
<dbReference type="BioGRID" id="853055">
    <property type="interactions" value="1"/>
</dbReference>
<dbReference type="ComplexPortal" id="CPX-3091">
    <property type="entry name" value="Aspartate carbamoyltransferase complex"/>
</dbReference>
<dbReference type="DIP" id="DIP-35089N"/>
<dbReference type="FunCoup" id="P0A786">
    <property type="interactions" value="803"/>
</dbReference>
<dbReference type="IntAct" id="P0A786">
    <property type="interactions" value="3"/>
</dbReference>
<dbReference type="MINT" id="P0A786"/>
<dbReference type="STRING" id="511145.b4245"/>
<dbReference type="DrugBank" id="DB05540">
    <property type="generic name" value="Alanosine"/>
</dbReference>
<dbReference type="jPOST" id="P0A786"/>
<dbReference type="PaxDb" id="511145-b4245"/>
<dbReference type="EnsemblBacteria" id="AAC77202">
    <property type="protein sequence ID" value="AAC77202"/>
    <property type="gene ID" value="b4245"/>
</dbReference>
<dbReference type="GeneID" id="93777579"/>
<dbReference type="GeneID" id="948767"/>
<dbReference type="KEGG" id="ecj:JW4204"/>
<dbReference type="KEGG" id="eco:b4245"/>
<dbReference type="KEGG" id="ecoc:C3026_22910"/>
<dbReference type="PATRIC" id="fig|1411691.4.peg.2456"/>
<dbReference type="EchoBASE" id="EB0798"/>
<dbReference type="eggNOG" id="COG0540">
    <property type="taxonomic scope" value="Bacteria"/>
</dbReference>
<dbReference type="HOGENOM" id="CLU_043846_1_2_6"/>
<dbReference type="InParanoid" id="P0A786"/>
<dbReference type="OMA" id="VLIMHPG"/>
<dbReference type="OrthoDB" id="9774690at2"/>
<dbReference type="PhylomeDB" id="P0A786"/>
<dbReference type="BioCyc" id="EcoCyc:ASPCARBCAT-MONOMER"/>
<dbReference type="BioCyc" id="MetaCyc:ASPCARBCAT-MONOMER"/>
<dbReference type="BRENDA" id="2.1.3.2">
    <property type="organism ID" value="2026"/>
</dbReference>
<dbReference type="SABIO-RK" id="P0A786"/>
<dbReference type="UniPathway" id="UPA00070">
    <property type="reaction ID" value="UER00116"/>
</dbReference>
<dbReference type="EvolutionaryTrace" id="P0A786"/>
<dbReference type="PRO" id="PR:P0A786"/>
<dbReference type="Proteomes" id="UP000000625">
    <property type="component" value="Chromosome"/>
</dbReference>
<dbReference type="GO" id="GO:0009347">
    <property type="term" value="C:aspartate carbamoyltransferase complex"/>
    <property type="evidence" value="ECO:0000353"/>
    <property type="project" value="ComplexPortal"/>
</dbReference>
<dbReference type="GO" id="GO:0005737">
    <property type="term" value="C:cytoplasm"/>
    <property type="evidence" value="ECO:0007005"/>
    <property type="project" value="UniProtKB"/>
</dbReference>
<dbReference type="GO" id="GO:0005829">
    <property type="term" value="C:cytosol"/>
    <property type="evidence" value="ECO:0000314"/>
    <property type="project" value="EcoCyc"/>
</dbReference>
<dbReference type="GO" id="GO:0016597">
    <property type="term" value="F:amino acid binding"/>
    <property type="evidence" value="ECO:0007669"/>
    <property type="project" value="InterPro"/>
</dbReference>
<dbReference type="GO" id="GO:0004070">
    <property type="term" value="F:aspartate carbamoyltransferase activity"/>
    <property type="evidence" value="ECO:0007669"/>
    <property type="project" value="UniProtKB-UniRule"/>
</dbReference>
<dbReference type="GO" id="GO:0042802">
    <property type="term" value="F:identical protein binding"/>
    <property type="evidence" value="ECO:0000353"/>
    <property type="project" value="IntAct"/>
</dbReference>
<dbReference type="GO" id="GO:0006207">
    <property type="term" value="P:'de novo' pyrimidine nucleobase biosynthetic process"/>
    <property type="evidence" value="ECO:0000314"/>
    <property type="project" value="ComplexPortal"/>
</dbReference>
<dbReference type="GO" id="GO:0044205">
    <property type="term" value="P:'de novo' UMP biosynthetic process"/>
    <property type="evidence" value="ECO:0007669"/>
    <property type="project" value="UniProtKB-UniRule"/>
</dbReference>
<dbReference type="GO" id="GO:0006541">
    <property type="term" value="P:glutamine metabolic process"/>
    <property type="evidence" value="ECO:0000318"/>
    <property type="project" value="GO_Central"/>
</dbReference>
<dbReference type="GO" id="GO:0070207">
    <property type="term" value="P:protein homotrimerization"/>
    <property type="evidence" value="ECO:0000314"/>
    <property type="project" value="EcoCyc"/>
</dbReference>
<dbReference type="FunFam" id="3.40.50.1370:FF:000001">
    <property type="entry name" value="Aspartate carbamoyltransferase"/>
    <property type="match status" value="1"/>
</dbReference>
<dbReference type="FunFam" id="3.40.50.1370:FF:000002">
    <property type="entry name" value="Aspartate carbamoyltransferase 2"/>
    <property type="match status" value="1"/>
</dbReference>
<dbReference type="Gene3D" id="3.40.50.1370">
    <property type="entry name" value="Aspartate/ornithine carbamoyltransferase"/>
    <property type="match status" value="2"/>
</dbReference>
<dbReference type="HAMAP" id="MF_00001">
    <property type="entry name" value="Asp_carb_tr"/>
    <property type="match status" value="1"/>
</dbReference>
<dbReference type="InterPro" id="IPR006132">
    <property type="entry name" value="Asp/Orn_carbamoyltranf_P-bd"/>
</dbReference>
<dbReference type="InterPro" id="IPR006130">
    <property type="entry name" value="Asp/Orn_carbamoylTrfase"/>
</dbReference>
<dbReference type="InterPro" id="IPR036901">
    <property type="entry name" value="Asp/Orn_carbamoylTrfase_sf"/>
</dbReference>
<dbReference type="InterPro" id="IPR002082">
    <property type="entry name" value="Asp_carbamoyltransf"/>
</dbReference>
<dbReference type="InterPro" id="IPR006131">
    <property type="entry name" value="Asp_carbamoyltransf_Asp/Orn-bd"/>
</dbReference>
<dbReference type="NCBIfam" id="TIGR00670">
    <property type="entry name" value="asp_carb_tr"/>
    <property type="match status" value="1"/>
</dbReference>
<dbReference type="NCBIfam" id="NF002032">
    <property type="entry name" value="PRK00856.1"/>
    <property type="match status" value="1"/>
</dbReference>
<dbReference type="PANTHER" id="PTHR45753:SF6">
    <property type="entry name" value="ASPARTATE CARBAMOYLTRANSFERASE"/>
    <property type="match status" value="1"/>
</dbReference>
<dbReference type="PANTHER" id="PTHR45753">
    <property type="entry name" value="ORNITHINE CARBAMOYLTRANSFERASE, MITOCHONDRIAL"/>
    <property type="match status" value="1"/>
</dbReference>
<dbReference type="Pfam" id="PF00185">
    <property type="entry name" value="OTCace"/>
    <property type="match status" value="1"/>
</dbReference>
<dbReference type="Pfam" id="PF02729">
    <property type="entry name" value="OTCace_N"/>
    <property type="match status" value="1"/>
</dbReference>
<dbReference type="PRINTS" id="PR00100">
    <property type="entry name" value="AOTCASE"/>
</dbReference>
<dbReference type="PRINTS" id="PR00101">
    <property type="entry name" value="ATCASE"/>
</dbReference>
<dbReference type="SUPFAM" id="SSF53671">
    <property type="entry name" value="Aspartate/ornithine carbamoyltransferase"/>
    <property type="match status" value="1"/>
</dbReference>
<dbReference type="PROSITE" id="PS00097">
    <property type="entry name" value="CARBAMOYLTRANSFERASE"/>
    <property type="match status" value="1"/>
</dbReference>